<comment type="function">
    <text evidence="1">Has flap endonuclease activity. During DNA replication, flap endonucleases cleave the 5'-overhanging flap structure that is generated by displacement synthesis when DNA polymerase encounters the 5'-end of a downstream Okazaki fragment.</text>
</comment>
<comment type="cofactor">
    <cofactor evidence="1">
        <name>Mg(2+)</name>
        <dbReference type="ChEBI" id="CHEBI:18420"/>
    </cofactor>
    <text evidence="1">Binds 2 Mg(2+) per subunit. Only one magnesium ion has a direct interaction with the protein, the other interactions are indirect.</text>
</comment>
<comment type="cofactor">
    <cofactor evidence="1">
        <name>K(+)</name>
        <dbReference type="ChEBI" id="CHEBI:29103"/>
    </cofactor>
    <text evidence="1">Binds 1 K(+) per subunit. The potassium ion strongly increases the affinity for DNA.</text>
</comment>
<comment type="similarity">
    <text evidence="1">Belongs to the Xni family.</text>
</comment>
<comment type="sequence caution" evidence="2">
    <conflict type="erroneous initiation">
        <sequence resource="EMBL-CDS" id="CAR19339"/>
    </conflict>
    <text>Extended N-terminus.</text>
</comment>
<proteinExistence type="inferred from homology"/>
<accession>B7NVU6</accession>
<sequence length="251" mass="28166">MAVHLLIVDALNLIRRIHAVQGSPCVETCQHALDQLIMHSQPTHAVAVFDDENRSSGWRHQRLPDYKAGRPPMQEELHNEMPALRAAFEQRGVPCWSASGNEADDLAATLAVKVTQAGHQATIVSTDKGYCQLLSPTLRIRDYFQKRWLDAPFIDKEFGVQPQQLPDYWGLAGISSSKVPGVAGIGPKSATQLLVEFQSLEGIYENLDAVAEKWRKKLETHKEMAFLCRDIARLQTDLHIDGNLQQLRLVR</sequence>
<organism>
    <name type="scientific">Escherichia coli O7:K1 (strain IAI39 / ExPEC)</name>
    <dbReference type="NCBI Taxonomy" id="585057"/>
    <lineage>
        <taxon>Bacteria</taxon>
        <taxon>Pseudomonadati</taxon>
        <taxon>Pseudomonadota</taxon>
        <taxon>Gammaproteobacteria</taxon>
        <taxon>Enterobacterales</taxon>
        <taxon>Enterobacteriaceae</taxon>
        <taxon>Escherichia</taxon>
    </lineage>
</organism>
<gene>
    <name evidence="1" type="primary">xni</name>
    <name evidence="1" type="synonym">ygdG</name>
    <name type="ordered locus">ECIAI39_3220</name>
</gene>
<protein>
    <recommendedName>
        <fullName evidence="1">Flap endonuclease Xni</fullName>
        <shortName evidence="1">FEN</shortName>
        <ecNumber evidence="1">3.1.-.-</ecNumber>
    </recommendedName>
</protein>
<name>XNI_ECO7I</name>
<keyword id="KW-0238">DNA-binding</keyword>
<keyword id="KW-0255">Endonuclease</keyword>
<keyword id="KW-0378">Hydrolase</keyword>
<keyword id="KW-0460">Magnesium</keyword>
<keyword id="KW-0479">Metal-binding</keyword>
<keyword id="KW-0540">Nuclease</keyword>
<keyword id="KW-0630">Potassium</keyword>
<reference key="1">
    <citation type="journal article" date="2009" name="PLoS Genet.">
        <title>Organised genome dynamics in the Escherichia coli species results in highly diverse adaptive paths.</title>
        <authorList>
            <person name="Touchon M."/>
            <person name="Hoede C."/>
            <person name="Tenaillon O."/>
            <person name="Barbe V."/>
            <person name="Baeriswyl S."/>
            <person name="Bidet P."/>
            <person name="Bingen E."/>
            <person name="Bonacorsi S."/>
            <person name="Bouchier C."/>
            <person name="Bouvet O."/>
            <person name="Calteau A."/>
            <person name="Chiapello H."/>
            <person name="Clermont O."/>
            <person name="Cruveiller S."/>
            <person name="Danchin A."/>
            <person name="Diard M."/>
            <person name="Dossat C."/>
            <person name="Karoui M.E."/>
            <person name="Frapy E."/>
            <person name="Garry L."/>
            <person name="Ghigo J.M."/>
            <person name="Gilles A.M."/>
            <person name="Johnson J."/>
            <person name="Le Bouguenec C."/>
            <person name="Lescat M."/>
            <person name="Mangenot S."/>
            <person name="Martinez-Jehanne V."/>
            <person name="Matic I."/>
            <person name="Nassif X."/>
            <person name="Oztas S."/>
            <person name="Petit M.A."/>
            <person name="Pichon C."/>
            <person name="Rouy Z."/>
            <person name="Ruf C.S."/>
            <person name="Schneider D."/>
            <person name="Tourret J."/>
            <person name="Vacherie B."/>
            <person name="Vallenet D."/>
            <person name="Medigue C."/>
            <person name="Rocha E.P.C."/>
            <person name="Denamur E."/>
        </authorList>
    </citation>
    <scope>NUCLEOTIDE SEQUENCE [LARGE SCALE GENOMIC DNA]</scope>
    <source>
        <strain>IAI39 / ExPEC</strain>
    </source>
</reference>
<evidence type="ECO:0000255" key="1">
    <source>
        <dbReference type="HAMAP-Rule" id="MF_01192"/>
    </source>
</evidence>
<evidence type="ECO:0000305" key="2"/>
<dbReference type="EC" id="3.1.-.-" evidence="1"/>
<dbReference type="EMBL" id="CU928164">
    <property type="protein sequence ID" value="CAR19339.1"/>
    <property type="status" value="ALT_INIT"/>
    <property type="molecule type" value="Genomic_DNA"/>
</dbReference>
<dbReference type="RefSeq" id="WP_015674734.1">
    <property type="nucleotide sequence ID" value="NC_011750.1"/>
</dbReference>
<dbReference type="RefSeq" id="YP_002409144.1">
    <property type="nucleotide sequence ID" value="NC_011750.1"/>
</dbReference>
<dbReference type="SMR" id="B7NVU6"/>
<dbReference type="STRING" id="585057.ECIAI39_3220"/>
<dbReference type="KEGG" id="ect:ECIAI39_3220"/>
<dbReference type="PATRIC" id="fig|585057.6.peg.3345"/>
<dbReference type="HOGENOM" id="CLU_004675_1_2_6"/>
<dbReference type="Proteomes" id="UP000000749">
    <property type="component" value="Chromosome"/>
</dbReference>
<dbReference type="GO" id="GO:0008409">
    <property type="term" value="F:5'-3' exonuclease activity"/>
    <property type="evidence" value="ECO:0007669"/>
    <property type="project" value="InterPro"/>
</dbReference>
<dbReference type="GO" id="GO:0017108">
    <property type="term" value="F:5'-flap endonuclease activity"/>
    <property type="evidence" value="ECO:0007669"/>
    <property type="project" value="UniProtKB-UniRule"/>
</dbReference>
<dbReference type="GO" id="GO:0003677">
    <property type="term" value="F:DNA binding"/>
    <property type="evidence" value="ECO:0007669"/>
    <property type="project" value="UniProtKB-UniRule"/>
</dbReference>
<dbReference type="GO" id="GO:0000287">
    <property type="term" value="F:magnesium ion binding"/>
    <property type="evidence" value="ECO:0007669"/>
    <property type="project" value="UniProtKB-UniRule"/>
</dbReference>
<dbReference type="GO" id="GO:0030955">
    <property type="term" value="F:potassium ion binding"/>
    <property type="evidence" value="ECO:0007669"/>
    <property type="project" value="UniProtKB-UniRule"/>
</dbReference>
<dbReference type="GO" id="GO:0033567">
    <property type="term" value="P:DNA replication, Okazaki fragment processing"/>
    <property type="evidence" value="ECO:0007669"/>
    <property type="project" value="UniProtKB-UniRule"/>
</dbReference>
<dbReference type="CDD" id="cd09898">
    <property type="entry name" value="H3TH_53EXO"/>
    <property type="match status" value="1"/>
</dbReference>
<dbReference type="CDD" id="cd09859">
    <property type="entry name" value="PIN_53EXO"/>
    <property type="match status" value="1"/>
</dbReference>
<dbReference type="FunFam" id="1.10.150.20:FF:000003">
    <property type="entry name" value="DNA polymerase I"/>
    <property type="match status" value="1"/>
</dbReference>
<dbReference type="FunFam" id="3.40.50.1010:FF:000011">
    <property type="entry name" value="Flap endonuclease Xni"/>
    <property type="match status" value="1"/>
</dbReference>
<dbReference type="Gene3D" id="1.10.150.20">
    <property type="entry name" value="5' to 3' exonuclease, C-terminal subdomain"/>
    <property type="match status" value="1"/>
</dbReference>
<dbReference type="Gene3D" id="3.40.50.1010">
    <property type="entry name" value="5'-nuclease"/>
    <property type="match status" value="1"/>
</dbReference>
<dbReference type="HAMAP" id="MF_01192">
    <property type="entry name" value="Xni"/>
    <property type="match status" value="1"/>
</dbReference>
<dbReference type="InterPro" id="IPR020046">
    <property type="entry name" value="5-3_exonucl_a-hlix_arch_N"/>
</dbReference>
<dbReference type="InterPro" id="IPR002421">
    <property type="entry name" value="5-3_exonuclease"/>
</dbReference>
<dbReference type="InterPro" id="IPR036279">
    <property type="entry name" value="5-3_exonuclease_C_sf"/>
</dbReference>
<dbReference type="InterPro" id="IPR020045">
    <property type="entry name" value="DNA_polI_H3TH"/>
</dbReference>
<dbReference type="InterPro" id="IPR038969">
    <property type="entry name" value="FEN"/>
</dbReference>
<dbReference type="InterPro" id="IPR008918">
    <property type="entry name" value="HhH2"/>
</dbReference>
<dbReference type="InterPro" id="IPR029060">
    <property type="entry name" value="PIN-like_dom_sf"/>
</dbReference>
<dbReference type="InterPro" id="IPR022895">
    <property type="entry name" value="Xni"/>
</dbReference>
<dbReference type="NCBIfam" id="NF007017">
    <property type="entry name" value="PRK09482.1"/>
    <property type="match status" value="1"/>
</dbReference>
<dbReference type="PANTHER" id="PTHR42646:SF2">
    <property type="entry name" value="5'-3' EXONUCLEASE FAMILY PROTEIN"/>
    <property type="match status" value="1"/>
</dbReference>
<dbReference type="PANTHER" id="PTHR42646">
    <property type="entry name" value="FLAP ENDONUCLEASE XNI"/>
    <property type="match status" value="1"/>
</dbReference>
<dbReference type="Pfam" id="PF01367">
    <property type="entry name" value="5_3_exonuc"/>
    <property type="match status" value="1"/>
</dbReference>
<dbReference type="Pfam" id="PF02739">
    <property type="entry name" value="5_3_exonuc_N"/>
    <property type="match status" value="1"/>
</dbReference>
<dbReference type="SMART" id="SM00475">
    <property type="entry name" value="53EXOc"/>
    <property type="match status" value="1"/>
</dbReference>
<dbReference type="SMART" id="SM00279">
    <property type="entry name" value="HhH2"/>
    <property type="match status" value="1"/>
</dbReference>
<dbReference type="SUPFAM" id="SSF47807">
    <property type="entry name" value="5' to 3' exonuclease, C-terminal subdomain"/>
    <property type="match status" value="1"/>
</dbReference>
<dbReference type="SUPFAM" id="SSF88723">
    <property type="entry name" value="PIN domain-like"/>
    <property type="match status" value="1"/>
</dbReference>
<feature type="chain" id="PRO_1000138379" description="Flap endonuclease Xni">
    <location>
        <begin position="1"/>
        <end position="251"/>
    </location>
</feature>
<feature type="domain" description="5'-3' exonuclease" evidence="1">
    <location>
        <begin position="160"/>
        <end position="249"/>
    </location>
</feature>
<feature type="region of interest" description="Interaction with DNA" evidence="1">
    <location>
        <begin position="184"/>
        <end position="189"/>
    </location>
</feature>
<feature type="binding site" evidence="1">
    <location>
        <position position="104"/>
    </location>
    <ligand>
        <name>Mg(2+)</name>
        <dbReference type="ChEBI" id="CHEBI:18420"/>
    </ligand>
</feature>
<feature type="binding site" evidence="1">
    <location>
        <position position="171"/>
    </location>
    <ligand>
        <name>K(+)</name>
        <dbReference type="ChEBI" id="CHEBI:29103"/>
    </ligand>
</feature>
<feature type="binding site" evidence="1">
    <location>
        <position position="172"/>
    </location>
    <ligand>
        <name>K(+)</name>
        <dbReference type="ChEBI" id="CHEBI:29103"/>
    </ligand>
</feature>
<feature type="binding site" evidence="1">
    <location>
        <position position="180"/>
    </location>
    <ligand>
        <name>K(+)</name>
        <dbReference type="ChEBI" id="CHEBI:29103"/>
    </ligand>
</feature>
<feature type="binding site" evidence="1">
    <location>
        <position position="182"/>
    </location>
    <ligand>
        <name>K(+)</name>
        <dbReference type="ChEBI" id="CHEBI:29103"/>
    </ligand>
</feature>
<feature type="binding site" evidence="1">
    <location>
        <position position="185"/>
    </location>
    <ligand>
        <name>K(+)</name>
        <dbReference type="ChEBI" id="CHEBI:29103"/>
    </ligand>
</feature>